<keyword id="KW-0963">Cytoplasm</keyword>
<keyword id="KW-0489">Methyltransferase</keyword>
<keyword id="KW-0949">S-adenosyl-L-methionine</keyword>
<keyword id="KW-0808">Transferase</keyword>
<keyword id="KW-0819">tRNA processing</keyword>
<dbReference type="EC" id="2.1.1.228" evidence="1"/>
<dbReference type="EMBL" id="AE016827">
    <property type="protein sequence ID" value="AAU37049.1"/>
    <property type="molecule type" value="Genomic_DNA"/>
</dbReference>
<dbReference type="RefSeq" id="WP_011199624.1">
    <property type="nucleotide sequence ID" value="NC_006300.1"/>
</dbReference>
<dbReference type="SMR" id="Q65VG1"/>
<dbReference type="STRING" id="221988.MS0442"/>
<dbReference type="KEGG" id="msu:MS0442"/>
<dbReference type="eggNOG" id="COG0336">
    <property type="taxonomic scope" value="Bacteria"/>
</dbReference>
<dbReference type="HOGENOM" id="CLU_047363_0_1_6"/>
<dbReference type="OrthoDB" id="9807416at2"/>
<dbReference type="Proteomes" id="UP000000607">
    <property type="component" value="Chromosome"/>
</dbReference>
<dbReference type="GO" id="GO:0005829">
    <property type="term" value="C:cytosol"/>
    <property type="evidence" value="ECO:0007669"/>
    <property type="project" value="TreeGrafter"/>
</dbReference>
<dbReference type="GO" id="GO:0052906">
    <property type="term" value="F:tRNA (guanine(37)-N1)-methyltransferase activity"/>
    <property type="evidence" value="ECO:0007669"/>
    <property type="project" value="UniProtKB-UniRule"/>
</dbReference>
<dbReference type="GO" id="GO:0002939">
    <property type="term" value="P:tRNA N1-guanine methylation"/>
    <property type="evidence" value="ECO:0007669"/>
    <property type="project" value="TreeGrafter"/>
</dbReference>
<dbReference type="CDD" id="cd18080">
    <property type="entry name" value="TrmD-like"/>
    <property type="match status" value="1"/>
</dbReference>
<dbReference type="FunFam" id="1.10.1270.20:FF:000001">
    <property type="entry name" value="tRNA (guanine-N(1)-)-methyltransferase"/>
    <property type="match status" value="1"/>
</dbReference>
<dbReference type="FunFam" id="3.40.1280.10:FF:000001">
    <property type="entry name" value="tRNA (guanine-N(1)-)-methyltransferase"/>
    <property type="match status" value="1"/>
</dbReference>
<dbReference type="Gene3D" id="3.40.1280.10">
    <property type="match status" value="1"/>
</dbReference>
<dbReference type="Gene3D" id="1.10.1270.20">
    <property type="entry name" value="tRNA(m1g37)methyltransferase, domain 2"/>
    <property type="match status" value="1"/>
</dbReference>
<dbReference type="HAMAP" id="MF_00605">
    <property type="entry name" value="TrmD"/>
    <property type="match status" value="1"/>
</dbReference>
<dbReference type="InterPro" id="IPR029028">
    <property type="entry name" value="Alpha/beta_knot_MTases"/>
</dbReference>
<dbReference type="InterPro" id="IPR023148">
    <property type="entry name" value="tRNA_m1G_MeTrfase_C_sf"/>
</dbReference>
<dbReference type="InterPro" id="IPR002649">
    <property type="entry name" value="tRNA_m1G_MeTrfase_TrmD"/>
</dbReference>
<dbReference type="InterPro" id="IPR029026">
    <property type="entry name" value="tRNA_m1G_MTases_N"/>
</dbReference>
<dbReference type="InterPro" id="IPR016009">
    <property type="entry name" value="tRNA_MeTrfase_TRMD/TRM10"/>
</dbReference>
<dbReference type="NCBIfam" id="NF000648">
    <property type="entry name" value="PRK00026.1"/>
    <property type="match status" value="1"/>
</dbReference>
<dbReference type="NCBIfam" id="TIGR00088">
    <property type="entry name" value="trmD"/>
    <property type="match status" value="1"/>
</dbReference>
<dbReference type="PANTHER" id="PTHR46417">
    <property type="entry name" value="TRNA (GUANINE-N(1)-)-METHYLTRANSFERASE"/>
    <property type="match status" value="1"/>
</dbReference>
<dbReference type="PANTHER" id="PTHR46417:SF1">
    <property type="entry name" value="TRNA (GUANINE-N(1)-)-METHYLTRANSFERASE"/>
    <property type="match status" value="1"/>
</dbReference>
<dbReference type="Pfam" id="PF01746">
    <property type="entry name" value="tRNA_m1G_MT"/>
    <property type="match status" value="1"/>
</dbReference>
<dbReference type="PIRSF" id="PIRSF000386">
    <property type="entry name" value="tRNA_mtase"/>
    <property type="match status" value="1"/>
</dbReference>
<dbReference type="SUPFAM" id="SSF75217">
    <property type="entry name" value="alpha/beta knot"/>
    <property type="match status" value="1"/>
</dbReference>
<feature type="chain" id="PRO_0000060404" description="tRNA (guanine-N(1)-)-methyltransferase">
    <location>
        <begin position="1"/>
        <end position="255"/>
    </location>
</feature>
<feature type="binding site" evidence="1">
    <location>
        <position position="113"/>
    </location>
    <ligand>
        <name>S-adenosyl-L-methionine</name>
        <dbReference type="ChEBI" id="CHEBI:59789"/>
    </ligand>
</feature>
<feature type="binding site" evidence="1">
    <location>
        <begin position="133"/>
        <end position="138"/>
    </location>
    <ligand>
        <name>S-adenosyl-L-methionine</name>
        <dbReference type="ChEBI" id="CHEBI:59789"/>
    </ligand>
</feature>
<organism>
    <name type="scientific">Mannheimia succiniciproducens (strain KCTC 0769BP / MBEL55E)</name>
    <dbReference type="NCBI Taxonomy" id="221988"/>
    <lineage>
        <taxon>Bacteria</taxon>
        <taxon>Pseudomonadati</taxon>
        <taxon>Pseudomonadota</taxon>
        <taxon>Gammaproteobacteria</taxon>
        <taxon>Pasteurellales</taxon>
        <taxon>Pasteurellaceae</taxon>
        <taxon>Basfia</taxon>
    </lineage>
</organism>
<sequence>MWIGIISLFPEMFKAITEFGVTGRAVKQNLLQVSCWNPRDFTHDKHKTVDDRPYGGGPGMLMMVQPLRDAIHAAKAEAGDGVKVIYLSPQGRKLDQTGVTELAANEKLILVCGRYEGIDERLIQTEIDEEWSIGDYVLTGGELPAMTLIDAVARFVPGVLGKQASAEEDSFAEGLLDCPHYTRPEVLDGYVVPPVLMSGNHEEIRKWRLKQSLERTWLRRPELLEKLALTDEQKKLLKDIIEAYHIRQSKTSDNG</sequence>
<reference key="1">
    <citation type="journal article" date="2004" name="Nat. Biotechnol.">
        <title>The genome sequence of the capnophilic rumen bacterium Mannheimia succiniciproducens.</title>
        <authorList>
            <person name="Hong S.H."/>
            <person name="Kim J.S."/>
            <person name="Lee S.Y."/>
            <person name="In Y.H."/>
            <person name="Choi S.S."/>
            <person name="Rih J.-K."/>
            <person name="Kim C.H."/>
            <person name="Jeong H."/>
            <person name="Hur C.G."/>
            <person name="Kim J.J."/>
        </authorList>
    </citation>
    <scope>NUCLEOTIDE SEQUENCE [LARGE SCALE GENOMIC DNA]</scope>
    <source>
        <strain>KCTC 0769BP / MBEL55E</strain>
    </source>
</reference>
<gene>
    <name evidence="1" type="primary">trmD</name>
    <name type="ordered locus">MS0442</name>
</gene>
<accession>Q65VG1</accession>
<proteinExistence type="inferred from homology"/>
<comment type="function">
    <text evidence="1">Specifically methylates guanosine-37 in various tRNAs.</text>
</comment>
<comment type="catalytic activity">
    <reaction evidence="1">
        <text>guanosine(37) in tRNA + S-adenosyl-L-methionine = N(1)-methylguanosine(37) in tRNA + S-adenosyl-L-homocysteine + H(+)</text>
        <dbReference type="Rhea" id="RHEA:36899"/>
        <dbReference type="Rhea" id="RHEA-COMP:10145"/>
        <dbReference type="Rhea" id="RHEA-COMP:10147"/>
        <dbReference type="ChEBI" id="CHEBI:15378"/>
        <dbReference type="ChEBI" id="CHEBI:57856"/>
        <dbReference type="ChEBI" id="CHEBI:59789"/>
        <dbReference type="ChEBI" id="CHEBI:73542"/>
        <dbReference type="ChEBI" id="CHEBI:74269"/>
        <dbReference type="EC" id="2.1.1.228"/>
    </reaction>
</comment>
<comment type="subunit">
    <text evidence="1">Homodimer.</text>
</comment>
<comment type="subcellular location">
    <subcellularLocation>
        <location evidence="1">Cytoplasm</location>
    </subcellularLocation>
</comment>
<comment type="similarity">
    <text evidence="1">Belongs to the RNA methyltransferase TrmD family.</text>
</comment>
<name>TRMD_MANSM</name>
<evidence type="ECO:0000255" key="1">
    <source>
        <dbReference type="HAMAP-Rule" id="MF_00605"/>
    </source>
</evidence>
<protein>
    <recommendedName>
        <fullName evidence="1">tRNA (guanine-N(1)-)-methyltransferase</fullName>
        <ecNumber evidence="1">2.1.1.228</ecNumber>
    </recommendedName>
    <alternativeName>
        <fullName evidence="1">M1G-methyltransferase</fullName>
    </alternativeName>
    <alternativeName>
        <fullName evidence="1">tRNA [GM37] methyltransferase</fullName>
    </alternativeName>
</protein>